<name>THOP1_HUMAN</name>
<organism>
    <name type="scientific">Homo sapiens</name>
    <name type="common">Human</name>
    <dbReference type="NCBI Taxonomy" id="9606"/>
    <lineage>
        <taxon>Eukaryota</taxon>
        <taxon>Metazoa</taxon>
        <taxon>Chordata</taxon>
        <taxon>Craniata</taxon>
        <taxon>Vertebrata</taxon>
        <taxon>Euteleostomi</taxon>
        <taxon>Mammalia</taxon>
        <taxon>Eutheria</taxon>
        <taxon>Euarchontoglires</taxon>
        <taxon>Primates</taxon>
        <taxon>Haplorrhini</taxon>
        <taxon>Catarrhini</taxon>
        <taxon>Hominidae</taxon>
        <taxon>Homo</taxon>
    </lineage>
</organism>
<reference key="1">
    <citation type="journal article" date="1995" name="Biochem. Biophys. Res. Commun.">
        <title>Cloning and functional expression of a metalloendopeptidase from human brain with the ability to cleave a beta-APP substrate peptide.</title>
        <authorList>
            <person name="Thompson A."/>
            <person name="Huber G."/>
            <person name="Malherbe P."/>
        </authorList>
    </citation>
    <scope>NUCLEOTIDE SEQUENCE [MRNA] (ISOFORM 1)</scope>
    <scope>FUNCTION</scope>
    <scope>CATALYTIC ACTIVITY</scope>
    <source>
        <tissue>Brain</tissue>
    </source>
</reference>
<reference key="2">
    <citation type="submission" date="1995-12" db="EMBL/GenBank/DDBJ databases">
        <title>cDNA cloning and gene structure of a human gene encoding a highly conserved metalloendopeptidase (EC 3.4.24.15).</title>
        <authorList>
            <person name="Taylor G.R."/>
            <person name="Otulakowski G."/>
            <person name="Lau C.Y."/>
            <person name="Munroe D.G."/>
        </authorList>
    </citation>
    <scope>NUCLEOTIDE SEQUENCE [MRNA] (ISOFORM 1)</scope>
</reference>
<reference key="3">
    <citation type="journal article" date="2004" name="Nat. Genet.">
        <title>Complete sequencing and characterization of 21,243 full-length human cDNAs.</title>
        <authorList>
            <person name="Ota T."/>
            <person name="Suzuki Y."/>
            <person name="Nishikawa T."/>
            <person name="Otsuki T."/>
            <person name="Sugiyama T."/>
            <person name="Irie R."/>
            <person name="Wakamatsu A."/>
            <person name="Hayashi K."/>
            <person name="Sato H."/>
            <person name="Nagai K."/>
            <person name="Kimura K."/>
            <person name="Makita H."/>
            <person name="Sekine M."/>
            <person name="Obayashi M."/>
            <person name="Nishi T."/>
            <person name="Shibahara T."/>
            <person name="Tanaka T."/>
            <person name="Ishii S."/>
            <person name="Yamamoto J."/>
            <person name="Saito K."/>
            <person name="Kawai Y."/>
            <person name="Isono Y."/>
            <person name="Nakamura Y."/>
            <person name="Nagahari K."/>
            <person name="Murakami K."/>
            <person name="Yasuda T."/>
            <person name="Iwayanagi T."/>
            <person name="Wagatsuma M."/>
            <person name="Shiratori A."/>
            <person name="Sudo H."/>
            <person name="Hosoiri T."/>
            <person name="Kaku Y."/>
            <person name="Kodaira H."/>
            <person name="Kondo H."/>
            <person name="Sugawara M."/>
            <person name="Takahashi M."/>
            <person name="Kanda K."/>
            <person name="Yokoi T."/>
            <person name="Furuya T."/>
            <person name="Kikkawa E."/>
            <person name="Omura Y."/>
            <person name="Abe K."/>
            <person name="Kamihara K."/>
            <person name="Katsuta N."/>
            <person name="Sato K."/>
            <person name="Tanikawa M."/>
            <person name="Yamazaki M."/>
            <person name="Ninomiya K."/>
            <person name="Ishibashi T."/>
            <person name="Yamashita H."/>
            <person name="Murakawa K."/>
            <person name="Fujimori K."/>
            <person name="Tanai H."/>
            <person name="Kimata M."/>
            <person name="Watanabe M."/>
            <person name="Hiraoka S."/>
            <person name="Chiba Y."/>
            <person name="Ishida S."/>
            <person name="Ono Y."/>
            <person name="Takiguchi S."/>
            <person name="Watanabe S."/>
            <person name="Yosida M."/>
            <person name="Hotuta T."/>
            <person name="Kusano J."/>
            <person name="Kanehori K."/>
            <person name="Takahashi-Fujii A."/>
            <person name="Hara H."/>
            <person name="Tanase T.-O."/>
            <person name="Nomura Y."/>
            <person name="Togiya S."/>
            <person name="Komai F."/>
            <person name="Hara R."/>
            <person name="Takeuchi K."/>
            <person name="Arita M."/>
            <person name="Imose N."/>
            <person name="Musashino K."/>
            <person name="Yuuki H."/>
            <person name="Oshima A."/>
            <person name="Sasaki N."/>
            <person name="Aotsuka S."/>
            <person name="Yoshikawa Y."/>
            <person name="Matsunawa H."/>
            <person name="Ichihara T."/>
            <person name="Shiohata N."/>
            <person name="Sano S."/>
            <person name="Moriya S."/>
            <person name="Momiyama H."/>
            <person name="Satoh N."/>
            <person name="Takami S."/>
            <person name="Terashima Y."/>
            <person name="Suzuki O."/>
            <person name="Nakagawa S."/>
            <person name="Senoh A."/>
            <person name="Mizoguchi H."/>
            <person name="Goto Y."/>
            <person name="Shimizu F."/>
            <person name="Wakebe H."/>
            <person name="Hishigaki H."/>
            <person name="Watanabe T."/>
            <person name="Sugiyama A."/>
            <person name="Takemoto M."/>
            <person name="Kawakami B."/>
            <person name="Yamazaki M."/>
            <person name="Watanabe K."/>
            <person name="Kumagai A."/>
            <person name="Itakura S."/>
            <person name="Fukuzumi Y."/>
            <person name="Fujimori Y."/>
            <person name="Komiyama M."/>
            <person name="Tashiro H."/>
            <person name="Tanigami A."/>
            <person name="Fujiwara T."/>
            <person name="Ono T."/>
            <person name="Yamada K."/>
            <person name="Fujii Y."/>
            <person name="Ozaki K."/>
            <person name="Hirao M."/>
            <person name="Ohmori Y."/>
            <person name="Kawabata A."/>
            <person name="Hikiji T."/>
            <person name="Kobatake N."/>
            <person name="Inagaki H."/>
            <person name="Ikema Y."/>
            <person name="Okamoto S."/>
            <person name="Okitani R."/>
            <person name="Kawakami T."/>
            <person name="Noguchi S."/>
            <person name="Itoh T."/>
            <person name="Shigeta K."/>
            <person name="Senba T."/>
            <person name="Matsumura K."/>
            <person name="Nakajima Y."/>
            <person name="Mizuno T."/>
            <person name="Morinaga M."/>
            <person name="Sasaki M."/>
            <person name="Togashi T."/>
            <person name="Oyama M."/>
            <person name="Hata H."/>
            <person name="Watanabe M."/>
            <person name="Komatsu T."/>
            <person name="Mizushima-Sugano J."/>
            <person name="Satoh T."/>
            <person name="Shirai Y."/>
            <person name="Takahashi Y."/>
            <person name="Nakagawa K."/>
            <person name="Okumura K."/>
            <person name="Nagase T."/>
            <person name="Nomura N."/>
            <person name="Kikuchi H."/>
            <person name="Masuho Y."/>
            <person name="Yamashita R."/>
            <person name="Nakai K."/>
            <person name="Yada T."/>
            <person name="Nakamura Y."/>
            <person name="Ohara O."/>
            <person name="Isogai T."/>
            <person name="Sugano S."/>
        </authorList>
    </citation>
    <scope>NUCLEOTIDE SEQUENCE [LARGE SCALE MRNA] (ISOFORM 2)</scope>
    <source>
        <tissue>Testis</tissue>
    </source>
</reference>
<reference key="4">
    <citation type="journal article" date="2004" name="Nature">
        <title>The DNA sequence and biology of human chromosome 19.</title>
        <authorList>
            <person name="Grimwood J."/>
            <person name="Gordon L.A."/>
            <person name="Olsen A.S."/>
            <person name="Terry A."/>
            <person name="Schmutz J."/>
            <person name="Lamerdin J.E."/>
            <person name="Hellsten U."/>
            <person name="Goodstein D."/>
            <person name="Couronne O."/>
            <person name="Tran-Gyamfi M."/>
            <person name="Aerts A."/>
            <person name="Altherr M."/>
            <person name="Ashworth L."/>
            <person name="Bajorek E."/>
            <person name="Black S."/>
            <person name="Branscomb E."/>
            <person name="Caenepeel S."/>
            <person name="Carrano A.V."/>
            <person name="Caoile C."/>
            <person name="Chan Y.M."/>
            <person name="Christensen M."/>
            <person name="Cleland C.A."/>
            <person name="Copeland A."/>
            <person name="Dalin E."/>
            <person name="Dehal P."/>
            <person name="Denys M."/>
            <person name="Detter J.C."/>
            <person name="Escobar J."/>
            <person name="Flowers D."/>
            <person name="Fotopulos D."/>
            <person name="Garcia C."/>
            <person name="Georgescu A.M."/>
            <person name="Glavina T."/>
            <person name="Gomez M."/>
            <person name="Gonzales E."/>
            <person name="Groza M."/>
            <person name="Hammon N."/>
            <person name="Hawkins T."/>
            <person name="Haydu L."/>
            <person name="Ho I."/>
            <person name="Huang W."/>
            <person name="Israni S."/>
            <person name="Jett J."/>
            <person name="Kadner K."/>
            <person name="Kimball H."/>
            <person name="Kobayashi A."/>
            <person name="Larionov V."/>
            <person name="Leem S.-H."/>
            <person name="Lopez F."/>
            <person name="Lou Y."/>
            <person name="Lowry S."/>
            <person name="Malfatti S."/>
            <person name="Martinez D."/>
            <person name="McCready P.M."/>
            <person name="Medina C."/>
            <person name="Morgan J."/>
            <person name="Nelson K."/>
            <person name="Nolan M."/>
            <person name="Ovcharenko I."/>
            <person name="Pitluck S."/>
            <person name="Pollard M."/>
            <person name="Popkie A.P."/>
            <person name="Predki P."/>
            <person name="Quan G."/>
            <person name="Ramirez L."/>
            <person name="Rash S."/>
            <person name="Retterer J."/>
            <person name="Rodriguez A."/>
            <person name="Rogers S."/>
            <person name="Salamov A."/>
            <person name="Salazar A."/>
            <person name="She X."/>
            <person name="Smith D."/>
            <person name="Slezak T."/>
            <person name="Solovyev V."/>
            <person name="Thayer N."/>
            <person name="Tice H."/>
            <person name="Tsai M."/>
            <person name="Ustaszewska A."/>
            <person name="Vo N."/>
            <person name="Wagner M."/>
            <person name="Wheeler J."/>
            <person name="Wu K."/>
            <person name="Xie G."/>
            <person name="Yang J."/>
            <person name="Dubchak I."/>
            <person name="Furey T.S."/>
            <person name="DeJong P."/>
            <person name="Dickson M."/>
            <person name="Gordon D."/>
            <person name="Eichler E.E."/>
            <person name="Pennacchio L.A."/>
            <person name="Richardson P."/>
            <person name="Stubbs L."/>
            <person name="Rokhsar D.S."/>
            <person name="Myers R.M."/>
            <person name="Rubin E.M."/>
            <person name="Lucas S.M."/>
        </authorList>
    </citation>
    <scope>NUCLEOTIDE SEQUENCE [LARGE SCALE GENOMIC DNA]</scope>
</reference>
<reference key="5">
    <citation type="journal article" date="2004" name="Genome Res.">
        <title>The status, quality, and expansion of the NIH full-length cDNA project: the Mammalian Gene Collection (MGC).</title>
        <authorList>
            <consortium name="The MGC Project Team"/>
        </authorList>
    </citation>
    <scope>NUCLEOTIDE SEQUENCE [LARGE SCALE MRNA] (ISOFORM 1)</scope>
    <source>
        <tissue>Lung</tissue>
        <tissue>Placenta</tissue>
    </source>
</reference>
<reference key="6">
    <citation type="journal article" date="1994" name="Biochemistry">
        <title>Identification of a metalloprotease from Alzheimer's disease brain able to degrade the beta-amyloid precursor protein and generate amyloidogenic fragments.</title>
        <authorList>
            <person name="Papastoitsis G."/>
            <person name="Siman R."/>
            <person name="Scott R."/>
            <person name="Abraham C.R."/>
        </authorList>
    </citation>
    <scope>PROTEIN SEQUENCE OF 67-78; 181-197 AND 199-200</scope>
    <source>
        <tissue>Brain</tissue>
    </source>
</reference>
<reference key="7">
    <citation type="journal article" date="2009" name="Science">
        <title>Lysine acetylation targets protein complexes and co-regulates major cellular functions.</title>
        <authorList>
            <person name="Choudhary C."/>
            <person name="Kumar C."/>
            <person name="Gnad F."/>
            <person name="Nielsen M.L."/>
            <person name="Rehman M."/>
            <person name="Walther T.C."/>
            <person name="Olsen J.V."/>
            <person name="Mann M."/>
        </authorList>
    </citation>
    <scope>ACETYLATION [LARGE SCALE ANALYSIS] AT LYS-257 AND LYS-538</scope>
    <scope>IDENTIFICATION BY MASS SPECTROMETRY [LARGE SCALE ANALYSIS]</scope>
</reference>
<reference key="8">
    <citation type="journal article" date="2011" name="BMC Syst. Biol.">
        <title>Initial characterization of the human central proteome.</title>
        <authorList>
            <person name="Burkard T.R."/>
            <person name="Planyavsky M."/>
            <person name="Kaupe I."/>
            <person name="Breitwieser F.P."/>
            <person name="Buerckstuemmer T."/>
            <person name="Bennett K.L."/>
            <person name="Superti-Furga G."/>
            <person name="Colinge J."/>
        </authorList>
    </citation>
    <scope>IDENTIFICATION BY MASS SPECTROMETRY [LARGE SCALE ANALYSIS]</scope>
</reference>
<reference key="9">
    <citation type="journal article" date="2012" name="Proc. Natl. Acad. Sci. U.S.A.">
        <title>N-terminal acetylome analyses and functional insights of the N-terminal acetyltransferase NatB.</title>
        <authorList>
            <person name="Van Damme P."/>
            <person name="Lasa M."/>
            <person name="Polevoda B."/>
            <person name="Gazquez C."/>
            <person name="Elosegui-Artola A."/>
            <person name="Kim D.S."/>
            <person name="De Juan-Pardo E."/>
            <person name="Demeyer K."/>
            <person name="Hole K."/>
            <person name="Larrea E."/>
            <person name="Timmerman E."/>
            <person name="Prieto J."/>
            <person name="Arnesen T."/>
            <person name="Sherman F."/>
            <person name="Gevaert K."/>
            <person name="Aldabe R."/>
        </authorList>
    </citation>
    <scope>IDENTIFICATION BY MASS SPECTROMETRY [LARGE SCALE ANALYSIS]</scope>
</reference>
<reference key="10">
    <citation type="journal article" date="2013" name="J. Proteome Res.">
        <title>Toward a comprehensive characterization of a human cancer cell phosphoproteome.</title>
        <authorList>
            <person name="Zhou H."/>
            <person name="Di Palma S."/>
            <person name="Preisinger C."/>
            <person name="Peng M."/>
            <person name="Polat A.N."/>
            <person name="Heck A.J."/>
            <person name="Mohammed S."/>
        </authorList>
    </citation>
    <scope>PHOSPHORYLATION [LARGE SCALE ANALYSIS] AT SER-16</scope>
    <scope>IDENTIFICATION BY MASS SPECTROMETRY [LARGE SCALE ANALYSIS]</scope>
    <source>
        <tissue>Erythroleukemia</tissue>
    </source>
</reference>
<reference key="11">
    <citation type="journal article" date="2014" name="J. Proteomics">
        <title>An enzyme assisted RP-RPLC approach for in-depth analysis of human liver phosphoproteome.</title>
        <authorList>
            <person name="Bian Y."/>
            <person name="Song C."/>
            <person name="Cheng K."/>
            <person name="Dong M."/>
            <person name="Wang F."/>
            <person name="Huang J."/>
            <person name="Sun D."/>
            <person name="Wang L."/>
            <person name="Ye M."/>
            <person name="Zou H."/>
        </authorList>
    </citation>
    <scope>IDENTIFICATION BY MASS SPECTROMETRY [LARGE SCALE ANALYSIS]</scope>
    <source>
        <tissue>Liver</tissue>
    </source>
</reference>
<reference key="12">
    <citation type="journal article" date="2007" name="J. Biol. Chem.">
        <title>Swapping the substrate specificities of the neuropeptidases neurolysin and thimet oligopeptidase.</title>
        <authorList>
            <person name="Lim E.J."/>
            <person name="Sampath S."/>
            <person name="Coll-Rodriguez J."/>
            <person name="Schmidt J."/>
            <person name="Ray K."/>
            <person name="Rodgers D.W."/>
        </authorList>
    </citation>
    <scope>X-RAY CRYSTALLOGRAPHY (1.95 ANGSTROMS) OF 16-688</scope>
    <scope>ZINC-BINDING SITES</scope>
    <scope>COFACTOR</scope>
    <scope>ACTIVE SITE</scope>
    <scope>FUNCTION</scope>
    <scope>SUBUNIT</scope>
</reference>
<evidence type="ECO:0000250" key="1">
    <source>
        <dbReference type="UniProtKB" id="P24155"/>
    </source>
</evidence>
<evidence type="ECO:0000250" key="2">
    <source>
        <dbReference type="UniProtKB" id="P47788"/>
    </source>
</evidence>
<evidence type="ECO:0000250" key="3">
    <source>
        <dbReference type="UniProtKB" id="Q8C1A5"/>
    </source>
</evidence>
<evidence type="ECO:0000269" key="4">
    <source>
    </source>
</evidence>
<evidence type="ECO:0000269" key="5">
    <source>
    </source>
</evidence>
<evidence type="ECO:0000303" key="6">
    <source>
    </source>
</evidence>
<evidence type="ECO:0000303" key="7">
    <source>
    </source>
</evidence>
<evidence type="ECO:0000303" key="8">
    <source>
    </source>
</evidence>
<evidence type="ECO:0000303" key="9">
    <source ref="2"/>
</evidence>
<evidence type="ECO:0000305" key="10"/>
<evidence type="ECO:0000305" key="11">
    <source>
    </source>
</evidence>
<evidence type="ECO:0007744" key="12">
    <source>
    </source>
</evidence>
<evidence type="ECO:0007744" key="13">
    <source>
    </source>
</evidence>
<evidence type="ECO:0007829" key="14">
    <source>
        <dbReference type="PDB" id="1S4B"/>
    </source>
</evidence>
<evidence type="ECO:0007829" key="15">
    <source>
        <dbReference type="PDB" id="2O36"/>
    </source>
</evidence>
<gene>
    <name type="primary">THOP1</name>
</gene>
<dbReference type="EC" id="3.4.24.15" evidence="11"/>
<dbReference type="EMBL" id="Z50115">
    <property type="protein sequence ID" value="CAA90477.1"/>
    <property type="molecule type" value="mRNA"/>
</dbReference>
<dbReference type="EMBL" id="U29366">
    <property type="protein sequence ID" value="AAA82607.1"/>
    <property type="molecule type" value="mRNA"/>
</dbReference>
<dbReference type="EMBL" id="AK093392">
    <property type="protein sequence ID" value="BAG52704.1"/>
    <property type="molecule type" value="mRNA"/>
</dbReference>
<dbReference type="EMBL" id="AC006538">
    <property type="protein sequence ID" value="AAD13118.1"/>
    <property type="molecule type" value="Genomic_DNA"/>
</dbReference>
<dbReference type="EMBL" id="BC000135">
    <property type="protein sequence ID" value="AAH00135.1"/>
    <property type="molecule type" value="mRNA"/>
</dbReference>
<dbReference type="EMBL" id="BC002391">
    <property type="protein sequence ID" value="AAH02391.1"/>
    <property type="molecule type" value="mRNA"/>
</dbReference>
<dbReference type="CCDS" id="CCDS12095.1">
    <molecule id="P52888-1"/>
</dbReference>
<dbReference type="PIR" id="JC4197">
    <property type="entry name" value="HYHUTH"/>
</dbReference>
<dbReference type="RefSeq" id="NP_003240.1">
    <molecule id="P52888-1"/>
    <property type="nucleotide sequence ID" value="NM_003249.5"/>
</dbReference>
<dbReference type="PDB" id="1S4B">
    <property type="method" value="X-ray"/>
    <property type="resolution" value="2.00 A"/>
    <property type="chains" value="P=16-689"/>
</dbReference>
<dbReference type="PDB" id="2O36">
    <property type="method" value="X-ray"/>
    <property type="resolution" value="1.95 A"/>
    <property type="chains" value="A=16-688"/>
</dbReference>
<dbReference type="PDBsum" id="1S4B"/>
<dbReference type="PDBsum" id="2O36"/>
<dbReference type="SMR" id="P52888"/>
<dbReference type="BioGRID" id="112921">
    <property type="interactions" value="93"/>
</dbReference>
<dbReference type="CORUM" id="P52888"/>
<dbReference type="FunCoup" id="P52888">
    <property type="interactions" value="1863"/>
</dbReference>
<dbReference type="IntAct" id="P52888">
    <property type="interactions" value="16"/>
</dbReference>
<dbReference type="MINT" id="P52888"/>
<dbReference type="STRING" id="9606.ENSP00000304467"/>
<dbReference type="ChEMBL" id="CHEMBL5291559"/>
<dbReference type="MEROPS" id="M03.001"/>
<dbReference type="GlyGen" id="P52888">
    <property type="glycosylation" value="2 sites, 1 O-linked glycan (1 site)"/>
</dbReference>
<dbReference type="iPTMnet" id="P52888"/>
<dbReference type="PhosphoSitePlus" id="P52888"/>
<dbReference type="SwissPalm" id="P52888"/>
<dbReference type="BioMuta" id="THOP1"/>
<dbReference type="DMDM" id="1708983"/>
<dbReference type="jPOST" id="P52888"/>
<dbReference type="MassIVE" id="P52888"/>
<dbReference type="PaxDb" id="9606-ENSP00000304467"/>
<dbReference type="PeptideAtlas" id="P52888"/>
<dbReference type="ProteomicsDB" id="3634"/>
<dbReference type="ProteomicsDB" id="56547">
    <molecule id="P52888-1"/>
</dbReference>
<dbReference type="Pumba" id="P52888"/>
<dbReference type="Antibodypedia" id="23054">
    <property type="antibodies" value="251 antibodies from 30 providers"/>
</dbReference>
<dbReference type="DNASU" id="7064"/>
<dbReference type="Ensembl" id="ENST00000307741.11">
    <molecule id="P52888-1"/>
    <property type="protein sequence ID" value="ENSP00000304467.5"/>
    <property type="gene ID" value="ENSG00000172009.15"/>
</dbReference>
<dbReference type="Ensembl" id="ENST00000395212.8">
    <molecule id="P52888-2"/>
    <property type="protein sequence ID" value="ENSP00000378638.3"/>
    <property type="gene ID" value="ENSG00000172009.15"/>
</dbReference>
<dbReference type="GeneID" id="7064"/>
<dbReference type="KEGG" id="hsa:7064"/>
<dbReference type="MANE-Select" id="ENST00000307741.11">
    <property type="protein sequence ID" value="ENSP00000304467.5"/>
    <property type="RefSeq nucleotide sequence ID" value="NM_003249.5"/>
    <property type="RefSeq protein sequence ID" value="NP_003240.1"/>
</dbReference>
<dbReference type="UCSC" id="uc002lwj.4">
    <molecule id="P52888-1"/>
    <property type="organism name" value="human"/>
</dbReference>
<dbReference type="AGR" id="HGNC:11793"/>
<dbReference type="CTD" id="7064"/>
<dbReference type="DisGeNET" id="7064"/>
<dbReference type="GeneCards" id="THOP1"/>
<dbReference type="HGNC" id="HGNC:11793">
    <property type="gene designation" value="THOP1"/>
</dbReference>
<dbReference type="HPA" id="ENSG00000172009">
    <property type="expression patterns" value="Low tissue specificity"/>
</dbReference>
<dbReference type="MIM" id="601117">
    <property type="type" value="gene"/>
</dbReference>
<dbReference type="neXtProt" id="NX_P52888"/>
<dbReference type="OpenTargets" id="ENSG00000172009"/>
<dbReference type="PharmGKB" id="PA36505"/>
<dbReference type="VEuPathDB" id="HostDB:ENSG00000172009"/>
<dbReference type="eggNOG" id="KOG2089">
    <property type="taxonomic scope" value="Eukaryota"/>
</dbReference>
<dbReference type="GeneTree" id="ENSGT00950000183171"/>
<dbReference type="HOGENOM" id="CLU_001805_2_0_1"/>
<dbReference type="InParanoid" id="P52888"/>
<dbReference type="OMA" id="KNFQSAM"/>
<dbReference type="OrthoDB" id="534666at2759"/>
<dbReference type="PAN-GO" id="P52888">
    <property type="GO annotations" value="4 GO annotations based on evolutionary models"/>
</dbReference>
<dbReference type="PhylomeDB" id="P52888"/>
<dbReference type="TreeFam" id="TF300459"/>
<dbReference type="BRENDA" id="3.4.24.15">
    <property type="organism ID" value="2681"/>
</dbReference>
<dbReference type="PathwayCommons" id="P52888"/>
<dbReference type="Reactome" id="R-HSA-983168">
    <property type="pathway name" value="Antigen processing: Ubiquitination &amp; Proteasome degradation"/>
</dbReference>
<dbReference type="SignaLink" id="P52888"/>
<dbReference type="SIGNOR" id="P52888"/>
<dbReference type="BioGRID-ORCS" id="7064">
    <property type="hits" value="22 hits in 1155 CRISPR screens"/>
</dbReference>
<dbReference type="ChiTaRS" id="THOP1">
    <property type="organism name" value="human"/>
</dbReference>
<dbReference type="EvolutionaryTrace" id="P52888"/>
<dbReference type="GeneWiki" id="THOP1"/>
<dbReference type="GenomeRNAi" id="7064"/>
<dbReference type="Pharos" id="P52888">
    <property type="development level" value="Tbio"/>
</dbReference>
<dbReference type="PRO" id="PR:P52888"/>
<dbReference type="Proteomes" id="UP000005640">
    <property type="component" value="Chromosome 19"/>
</dbReference>
<dbReference type="RNAct" id="P52888">
    <property type="molecule type" value="protein"/>
</dbReference>
<dbReference type="Bgee" id="ENSG00000172009">
    <property type="expression patterns" value="Expressed in left testis and 125 other cell types or tissues"/>
</dbReference>
<dbReference type="ExpressionAtlas" id="P52888">
    <property type="expression patterns" value="baseline and differential"/>
</dbReference>
<dbReference type="GO" id="GO:0005829">
    <property type="term" value="C:cytosol"/>
    <property type="evidence" value="ECO:0000304"/>
    <property type="project" value="Reactome"/>
</dbReference>
<dbReference type="GO" id="GO:0005758">
    <property type="term" value="C:mitochondrial intermembrane space"/>
    <property type="evidence" value="ECO:0000318"/>
    <property type="project" value="GO_Central"/>
</dbReference>
<dbReference type="GO" id="GO:0046872">
    <property type="term" value="F:metal ion binding"/>
    <property type="evidence" value="ECO:0007669"/>
    <property type="project" value="UniProtKB-KW"/>
</dbReference>
<dbReference type="GO" id="GO:0004222">
    <property type="term" value="F:metalloendopeptidase activity"/>
    <property type="evidence" value="ECO:0000318"/>
    <property type="project" value="GO_Central"/>
</dbReference>
<dbReference type="GO" id="GO:0006518">
    <property type="term" value="P:peptide metabolic process"/>
    <property type="evidence" value="ECO:0000318"/>
    <property type="project" value="GO_Central"/>
</dbReference>
<dbReference type="GO" id="GO:0000209">
    <property type="term" value="P:protein polyubiquitination"/>
    <property type="evidence" value="ECO:0000304"/>
    <property type="project" value="Reactome"/>
</dbReference>
<dbReference type="GO" id="GO:0006508">
    <property type="term" value="P:proteolysis"/>
    <property type="evidence" value="ECO:0000318"/>
    <property type="project" value="GO_Central"/>
</dbReference>
<dbReference type="CDD" id="cd06455">
    <property type="entry name" value="M3A_TOP"/>
    <property type="match status" value="1"/>
</dbReference>
<dbReference type="FunFam" id="1.20.1050.40:FF:000001">
    <property type="entry name" value="Thimet oligopeptidase 1"/>
    <property type="match status" value="1"/>
</dbReference>
<dbReference type="FunFam" id="3.40.390.10:FF:000006">
    <property type="entry name" value="Thimet oligopeptidase 1"/>
    <property type="match status" value="1"/>
</dbReference>
<dbReference type="Gene3D" id="3.40.390.10">
    <property type="entry name" value="Collagenase (Catalytic Domain)"/>
    <property type="match status" value="1"/>
</dbReference>
<dbReference type="Gene3D" id="1.20.1050.40">
    <property type="entry name" value="Endopeptidase. Chain P, domain 1"/>
    <property type="match status" value="1"/>
</dbReference>
<dbReference type="Gene3D" id="1.10.1370.10">
    <property type="entry name" value="Neurolysin, domain 3"/>
    <property type="match status" value="1"/>
</dbReference>
<dbReference type="InterPro" id="IPR024079">
    <property type="entry name" value="MetalloPept_cat_dom_sf"/>
</dbReference>
<dbReference type="InterPro" id="IPR024077">
    <property type="entry name" value="Neurolysin/TOP_dom2"/>
</dbReference>
<dbReference type="InterPro" id="IPR024080">
    <property type="entry name" value="Neurolysin/TOP_N"/>
</dbReference>
<dbReference type="InterPro" id="IPR045090">
    <property type="entry name" value="Pept_M3A_M3B"/>
</dbReference>
<dbReference type="InterPro" id="IPR001567">
    <property type="entry name" value="Pept_M3A_M3B_dom"/>
</dbReference>
<dbReference type="PANTHER" id="PTHR11804">
    <property type="entry name" value="PROTEASE M3 THIMET OLIGOPEPTIDASE-RELATED"/>
    <property type="match status" value="1"/>
</dbReference>
<dbReference type="PANTHER" id="PTHR11804:SF50">
    <property type="entry name" value="THIMET OLIGOPEPTIDASE"/>
    <property type="match status" value="1"/>
</dbReference>
<dbReference type="Pfam" id="PF01432">
    <property type="entry name" value="Peptidase_M3"/>
    <property type="match status" value="1"/>
</dbReference>
<dbReference type="SUPFAM" id="SSF55486">
    <property type="entry name" value="Metalloproteases ('zincins'), catalytic domain"/>
    <property type="match status" value="1"/>
</dbReference>
<dbReference type="PROSITE" id="PS00142">
    <property type="entry name" value="ZINC_PROTEASE"/>
    <property type="match status" value="1"/>
</dbReference>
<sequence>MKPPAACAGDMADAASPCSVVNDLRWDLSAQQIEERTRELIEQTKRVYDQVGTQEFEDVSYESTLKALADVEVTYTVQRNILDFPQHVSPSKDIRTASTEADKKLSEFDVEMSMREDVYQRIVWLQEKVQKDSLRPEAARYLERLIKLGRRNGLHLPRETQENIKRIKKKLSLLCIDFNKNLNEDTTFLPFTLQELGGLPEDFLNSLEKMEDGKLKVTLKYPHYFPLLKKCHVPETRRKVEEAFNCRCKEENCAILKELVTLRAQKSRLLGFHTHADYVLEMNMAKTSQTVATFLDELAQKLKPLGEQERAVILELKRAECERRGLPFDGRIRAWDMRYYMNQVEETRYCVDQNLLKEYFPVQVVTHGLLGIYQELLGLAFHHEEGASAWHEDVRLYTARDAASGEVVGKFYLDLYPREGKYGHAACFGLQPGCLRQDGSRQIAIAAMVANFTKPTADAPSLLQHDEVETYFHEFGHVMHQLCSQAEFAMFSGTHVERDFVEAPSQMLENWVWEQEPLLRMSRHYRTGSAVPRELLEKLIESRQANTGLFNLRQIVLAKVDQALHTQTDADPAEEYARLCQEILGVPATPGTNMPATFGHLAGGYDAQYYGYLWSEVYSMDMFHTRFKQEGVLNSKVGMDYRSCILRPGGSEDASAMLRRFLGRDPKQDAFLLSKGLQVGGCEPEPQVC</sequence>
<comment type="function">
    <text evidence="1 4 5">Involved in the metabolism of neuropeptides under 20 amino acid residues long. Involved in cytoplasmic peptide degradation (PubMed:17251185, PubMed:7639763). Able to degrade the amyloid-beta precursor protein and generate amyloidogenic fragments (PubMed:17251185, PubMed:7639763). Also acts as a regulator of cannabinoid signaling pathway by mediating degradation of hemopressin, an antagonist peptide of the cannabinoid receptor CNR1 (By similarity).</text>
</comment>
<comment type="catalytic activity">
    <reaction evidence="11">
        <text>Preferential cleavage of bonds with hydrophobic residues at P1, P2 and P3' and a small residue at P1' in substrates of 5 to 15 residues.</text>
        <dbReference type="EC" id="3.4.24.15"/>
    </reaction>
</comment>
<comment type="cofactor">
    <cofactor evidence="4">
        <name>Zn(2+)</name>
        <dbReference type="ChEBI" id="CHEBI:29105"/>
    </cofactor>
    <text evidence="4">Binds 1 zinc ion per subunit.</text>
</comment>
<comment type="subunit">
    <text evidence="2">Monomer.</text>
</comment>
<comment type="interaction">
    <interactant intactId="EBI-372399">
        <id>P52888</id>
    </interactant>
    <interactant intactId="EBI-12135243">
        <id>O95208-2</id>
        <label>EPN2</label>
    </interactant>
    <organismsDiffer>false</organismsDiffer>
    <experiments>3</experiments>
</comment>
<comment type="interaction">
    <interactant intactId="EBI-372399">
        <id>P52888</id>
    </interactant>
    <interactant intactId="EBI-748974">
        <id>Q96CV9</id>
        <label>OPTN</label>
    </interactant>
    <organismsDiffer>false</organismsDiffer>
    <experiments>3</experiments>
</comment>
<comment type="interaction">
    <interactant intactId="EBI-372399">
        <id>P52888</id>
    </interactant>
    <interactant intactId="EBI-397530">
        <id>P62161</id>
        <label>Calm3</label>
    </interactant>
    <organismsDiffer>true</organismsDiffer>
    <experiments>2</experiments>
</comment>
<comment type="subcellular location">
    <subcellularLocation>
        <location evidence="2">Cytoplasm</location>
    </subcellularLocation>
</comment>
<comment type="alternative products">
    <event type="alternative splicing"/>
    <isoform>
        <id>P52888-1</id>
        <name>1</name>
        <sequence type="displayed"/>
    </isoform>
    <isoform>
        <id>P52888-2</id>
        <name>2</name>
        <sequence type="described" ref="VSP_056494 VSP_056495"/>
    </isoform>
</comment>
<comment type="similarity">
    <text evidence="10">Belongs to the peptidase M3 family.</text>
</comment>
<accession>P52888</accession>
<accession>B3KSE2</accession>
<accession>Q9UCB3</accession>
<proteinExistence type="evidence at protein level"/>
<feature type="chain" id="PRO_0000078153" description="Thimet oligopeptidase">
    <location>
        <begin position="1"/>
        <end position="689"/>
    </location>
</feature>
<feature type="active site" evidence="4">
    <location>
        <position position="474"/>
    </location>
</feature>
<feature type="binding site" evidence="4">
    <location>
        <position position="473"/>
    </location>
    <ligand>
        <name>Zn(2+)</name>
        <dbReference type="ChEBI" id="CHEBI:29105"/>
        <note>catalytic</note>
    </ligand>
</feature>
<feature type="binding site" evidence="4">
    <location>
        <position position="477"/>
    </location>
    <ligand>
        <name>Zn(2+)</name>
        <dbReference type="ChEBI" id="CHEBI:29105"/>
        <note>catalytic</note>
    </ligand>
</feature>
<feature type="binding site" evidence="4">
    <location>
        <position position="480"/>
    </location>
    <ligand>
        <name>Zn(2+)</name>
        <dbReference type="ChEBI" id="CHEBI:29105"/>
        <note>catalytic</note>
    </ligand>
</feature>
<feature type="modified residue" description="Phosphoserine" evidence="13">
    <location>
        <position position="16"/>
    </location>
</feature>
<feature type="modified residue" description="Phosphoserine" evidence="3">
    <location>
        <position position="172"/>
    </location>
</feature>
<feature type="modified residue" description="N6-acetyllysine" evidence="12">
    <location>
        <position position="257"/>
    </location>
</feature>
<feature type="modified residue" description="Phosphotyrosine" evidence="3">
    <location>
        <position position="278"/>
    </location>
</feature>
<feature type="modified residue" description="N6-acetyllysine" evidence="12">
    <location>
        <position position="538"/>
    </location>
</feature>
<feature type="splice variant" id="VSP_056494" description="In isoform 2." evidence="6">
    <location>
        <begin position="1"/>
        <end position="489"/>
    </location>
</feature>
<feature type="splice variant" id="VSP_056495" description="In isoform 2." evidence="6">
    <original>K</original>
    <variation>KFPHYEVRPLRHVSLCLPLTWCDPGSGQPPESLTRNRWLPALRAGPALPGCNIALGSLQ</variation>
    <location>
        <position position="636"/>
    </location>
</feature>
<feature type="helix" evidence="15">
    <location>
        <begin position="30"/>
        <end position="52"/>
    </location>
</feature>
<feature type="helix" evidence="15">
    <location>
        <begin position="56"/>
        <end position="58"/>
    </location>
</feature>
<feature type="turn" evidence="15">
    <location>
        <begin position="61"/>
        <end position="64"/>
    </location>
</feature>
<feature type="helix" evidence="15">
    <location>
        <begin position="65"/>
        <end position="83"/>
    </location>
</feature>
<feature type="helix" evidence="15">
    <location>
        <begin position="85"/>
        <end position="88"/>
    </location>
</feature>
<feature type="helix" evidence="15">
    <location>
        <begin position="92"/>
        <end position="113"/>
    </location>
</feature>
<feature type="helix" evidence="15">
    <location>
        <begin position="116"/>
        <end position="128"/>
    </location>
</feature>
<feature type="helix" evidence="15">
    <location>
        <begin position="136"/>
        <end position="151"/>
    </location>
</feature>
<feature type="turn" evidence="15">
    <location>
        <begin position="152"/>
        <end position="155"/>
    </location>
</feature>
<feature type="helix" evidence="15">
    <location>
        <begin position="158"/>
        <end position="184"/>
    </location>
</feature>
<feature type="strand" evidence="15">
    <location>
        <begin position="188"/>
        <end position="191"/>
    </location>
</feature>
<feature type="turn" evidence="15">
    <location>
        <begin position="193"/>
        <end position="198"/>
    </location>
</feature>
<feature type="helix" evidence="15">
    <location>
        <begin position="201"/>
        <end position="204"/>
    </location>
</feature>
<feature type="strand" evidence="15">
    <location>
        <begin position="207"/>
        <end position="209"/>
    </location>
</feature>
<feature type="strand" evidence="15">
    <location>
        <begin position="215"/>
        <end position="220"/>
    </location>
</feature>
<feature type="helix" evidence="15">
    <location>
        <begin position="221"/>
        <end position="230"/>
    </location>
</feature>
<feature type="helix" evidence="15">
    <location>
        <begin position="234"/>
        <end position="244"/>
    </location>
</feature>
<feature type="turn" evidence="15">
    <location>
        <begin position="245"/>
        <end position="248"/>
    </location>
</feature>
<feature type="helix" evidence="15">
    <location>
        <begin position="249"/>
        <end position="269"/>
    </location>
</feature>
<feature type="helix" evidence="15">
    <location>
        <begin position="275"/>
        <end position="280"/>
    </location>
</feature>
<feature type="helix" evidence="15">
    <location>
        <begin position="288"/>
        <end position="324"/>
    </location>
</feature>
<feature type="turn" evidence="15">
    <location>
        <begin position="334"/>
        <end position="336"/>
    </location>
</feature>
<feature type="helix" evidence="15">
    <location>
        <begin position="337"/>
        <end position="348"/>
    </location>
</feature>
<feature type="helix" evidence="15">
    <location>
        <begin position="353"/>
        <end position="356"/>
    </location>
</feature>
<feature type="helix" evidence="15">
    <location>
        <begin position="357"/>
        <end position="359"/>
    </location>
</feature>
<feature type="helix" evidence="15">
    <location>
        <begin position="362"/>
        <end position="377"/>
    </location>
</feature>
<feature type="strand" evidence="15">
    <location>
        <begin position="379"/>
        <end position="383"/>
    </location>
</feature>
<feature type="strand" evidence="15">
    <location>
        <begin position="395"/>
        <end position="401"/>
    </location>
</feature>
<feature type="turn" evidence="15">
    <location>
        <begin position="402"/>
        <end position="404"/>
    </location>
</feature>
<feature type="strand" evidence="15">
    <location>
        <begin position="407"/>
        <end position="414"/>
    </location>
</feature>
<feature type="strand" evidence="15">
    <location>
        <begin position="426"/>
        <end position="431"/>
    </location>
</feature>
<feature type="strand" evidence="15">
    <location>
        <begin position="444"/>
        <end position="449"/>
    </location>
</feature>
<feature type="helix" evidence="15">
    <location>
        <begin position="465"/>
        <end position="483"/>
    </location>
</feature>
<feature type="helix" evidence="15">
    <location>
        <begin position="489"/>
        <end position="491"/>
    </location>
</feature>
<feature type="turn" evidence="15">
    <location>
        <begin position="498"/>
        <end position="502"/>
    </location>
</feature>
<feature type="helix" evidence="15">
    <location>
        <begin position="503"/>
        <end position="509"/>
    </location>
</feature>
<feature type="helix" evidence="15">
    <location>
        <begin position="510"/>
        <end position="513"/>
    </location>
</feature>
<feature type="helix" evidence="15">
    <location>
        <begin position="515"/>
        <end position="520"/>
    </location>
</feature>
<feature type="turn" evidence="15">
    <location>
        <begin position="525"/>
        <end position="527"/>
    </location>
</feature>
<feature type="helix" evidence="15">
    <location>
        <begin position="533"/>
        <end position="541"/>
    </location>
</feature>
<feature type="helix" evidence="15">
    <location>
        <begin position="542"/>
        <end position="544"/>
    </location>
</feature>
<feature type="helix" evidence="15">
    <location>
        <begin position="547"/>
        <end position="564"/>
    </location>
</feature>
<feature type="helix" evidence="15">
    <location>
        <begin position="572"/>
        <end position="582"/>
    </location>
</feature>
<feature type="helix" evidence="15">
    <location>
        <begin position="594"/>
        <end position="597"/>
    </location>
</feature>
<feature type="helix" evidence="15">
    <location>
        <begin position="599"/>
        <end position="602"/>
    </location>
</feature>
<feature type="turn" evidence="14">
    <location>
        <begin position="606"/>
        <end position="610"/>
    </location>
</feature>
<feature type="helix" evidence="15">
    <location>
        <begin position="611"/>
        <end position="630"/>
    </location>
</feature>
<feature type="helix" evidence="15">
    <location>
        <begin position="635"/>
        <end position="644"/>
    </location>
</feature>
<feature type="turn" evidence="15">
    <location>
        <begin position="645"/>
        <end position="648"/>
    </location>
</feature>
<feature type="helix" evidence="15">
    <location>
        <begin position="649"/>
        <end position="651"/>
    </location>
</feature>
<feature type="helix" evidence="15">
    <location>
        <begin position="654"/>
        <end position="662"/>
    </location>
</feature>
<feature type="helix" evidence="15">
    <location>
        <begin position="669"/>
        <end position="674"/>
    </location>
</feature>
<protein>
    <recommendedName>
        <fullName evidence="7">Thimet oligopeptidase</fullName>
        <ecNumber evidence="11">3.4.24.15</ecNumber>
    </recommendedName>
    <alternativeName>
        <fullName evidence="9">Endopeptidase 24.15</fullName>
    </alternativeName>
    <alternativeName>
        <fullName evidence="8">MP78</fullName>
    </alternativeName>
</protein>
<keyword id="KW-0002">3D-structure</keyword>
<keyword id="KW-0007">Acetylation</keyword>
<keyword id="KW-0025">Alternative splicing</keyword>
<keyword id="KW-0963">Cytoplasm</keyword>
<keyword id="KW-0903">Direct protein sequencing</keyword>
<keyword id="KW-0378">Hydrolase</keyword>
<keyword id="KW-0479">Metal-binding</keyword>
<keyword id="KW-0482">Metalloprotease</keyword>
<keyword id="KW-0597">Phosphoprotein</keyword>
<keyword id="KW-0645">Protease</keyword>
<keyword id="KW-1267">Proteomics identification</keyword>
<keyword id="KW-1185">Reference proteome</keyword>
<keyword id="KW-0862">Zinc</keyword>